<organism>
    <name type="scientific">Debaryomyces hansenii (strain ATCC 36239 / CBS 767 / BCRC 21394 / JCM 1990 / NBRC 0083 / IGC 2968)</name>
    <name type="common">Yeast</name>
    <name type="synonym">Torulaspora hansenii</name>
    <dbReference type="NCBI Taxonomy" id="284592"/>
    <lineage>
        <taxon>Eukaryota</taxon>
        <taxon>Fungi</taxon>
        <taxon>Dikarya</taxon>
        <taxon>Ascomycota</taxon>
        <taxon>Saccharomycotina</taxon>
        <taxon>Pichiomycetes</taxon>
        <taxon>Debaryomycetaceae</taxon>
        <taxon>Debaryomyces</taxon>
    </lineage>
</organism>
<gene>
    <name type="primary">HTB2</name>
    <name type="ordered locus">DEHA2F18304g</name>
</gene>
<dbReference type="EMBL" id="CR382138">
    <property type="protein sequence ID" value="CAG89537.1"/>
    <property type="molecule type" value="Genomic_DNA"/>
</dbReference>
<dbReference type="RefSeq" id="XP_461154.1">
    <property type="nucleotide sequence ID" value="XM_461154.1"/>
</dbReference>
<dbReference type="SMR" id="Q6BKW7"/>
<dbReference type="FunCoup" id="Q6BKW7">
    <property type="interactions" value="1211"/>
</dbReference>
<dbReference type="STRING" id="284592.Q6BKW7"/>
<dbReference type="GeneID" id="2904316"/>
<dbReference type="KEGG" id="dha:DEHA2F18304g"/>
<dbReference type="VEuPathDB" id="FungiDB:DEHA2F18304g"/>
<dbReference type="eggNOG" id="KOG1744">
    <property type="taxonomic scope" value="Eukaryota"/>
</dbReference>
<dbReference type="HOGENOM" id="CLU_075666_1_3_1"/>
<dbReference type="InParanoid" id="Q6BKW7"/>
<dbReference type="OMA" id="PLVCHIS"/>
<dbReference type="OrthoDB" id="10254238at2759"/>
<dbReference type="Proteomes" id="UP000000599">
    <property type="component" value="Chromosome F"/>
</dbReference>
<dbReference type="GO" id="GO:0000786">
    <property type="term" value="C:nucleosome"/>
    <property type="evidence" value="ECO:0007669"/>
    <property type="project" value="UniProtKB-KW"/>
</dbReference>
<dbReference type="GO" id="GO:0005634">
    <property type="term" value="C:nucleus"/>
    <property type="evidence" value="ECO:0007669"/>
    <property type="project" value="UniProtKB-SubCell"/>
</dbReference>
<dbReference type="GO" id="GO:0003677">
    <property type="term" value="F:DNA binding"/>
    <property type="evidence" value="ECO:0007669"/>
    <property type="project" value="UniProtKB-KW"/>
</dbReference>
<dbReference type="GO" id="GO:0046982">
    <property type="term" value="F:protein heterodimerization activity"/>
    <property type="evidence" value="ECO:0007669"/>
    <property type="project" value="InterPro"/>
</dbReference>
<dbReference type="GO" id="GO:0030527">
    <property type="term" value="F:structural constituent of chromatin"/>
    <property type="evidence" value="ECO:0007669"/>
    <property type="project" value="InterPro"/>
</dbReference>
<dbReference type="CDD" id="cd22910">
    <property type="entry name" value="HFD_H2B"/>
    <property type="match status" value="1"/>
</dbReference>
<dbReference type="FunFam" id="1.10.20.10:FF:000014">
    <property type="entry name" value="Histone H2B"/>
    <property type="match status" value="1"/>
</dbReference>
<dbReference type="Gene3D" id="1.10.20.10">
    <property type="entry name" value="Histone, subunit A"/>
    <property type="match status" value="1"/>
</dbReference>
<dbReference type="InterPro" id="IPR009072">
    <property type="entry name" value="Histone-fold"/>
</dbReference>
<dbReference type="InterPro" id="IPR007125">
    <property type="entry name" value="Histone_H2A/H2B/H3"/>
</dbReference>
<dbReference type="InterPro" id="IPR000558">
    <property type="entry name" value="Histone_H2B"/>
</dbReference>
<dbReference type="InterPro" id="IPR055333">
    <property type="entry name" value="HISTONE_H2B_site"/>
</dbReference>
<dbReference type="PANTHER" id="PTHR23428">
    <property type="entry name" value="HISTONE H2B"/>
    <property type="match status" value="1"/>
</dbReference>
<dbReference type="Pfam" id="PF00125">
    <property type="entry name" value="Histone"/>
    <property type="match status" value="1"/>
</dbReference>
<dbReference type="PRINTS" id="PR00621">
    <property type="entry name" value="HISTONEH2B"/>
</dbReference>
<dbReference type="SMART" id="SM00427">
    <property type="entry name" value="H2B"/>
    <property type="match status" value="1"/>
</dbReference>
<dbReference type="SUPFAM" id="SSF47113">
    <property type="entry name" value="Histone-fold"/>
    <property type="match status" value="1"/>
</dbReference>
<dbReference type="PROSITE" id="PS00357">
    <property type="entry name" value="HISTONE_H2B"/>
    <property type="match status" value="1"/>
</dbReference>
<reference key="1">
    <citation type="journal article" date="2004" name="Nature">
        <title>Genome evolution in yeasts.</title>
        <authorList>
            <person name="Dujon B."/>
            <person name="Sherman D."/>
            <person name="Fischer G."/>
            <person name="Durrens P."/>
            <person name="Casaregola S."/>
            <person name="Lafontaine I."/>
            <person name="de Montigny J."/>
            <person name="Marck C."/>
            <person name="Neuveglise C."/>
            <person name="Talla E."/>
            <person name="Goffard N."/>
            <person name="Frangeul L."/>
            <person name="Aigle M."/>
            <person name="Anthouard V."/>
            <person name="Babour A."/>
            <person name="Barbe V."/>
            <person name="Barnay S."/>
            <person name="Blanchin S."/>
            <person name="Beckerich J.-M."/>
            <person name="Beyne E."/>
            <person name="Bleykasten C."/>
            <person name="Boisrame A."/>
            <person name="Boyer J."/>
            <person name="Cattolico L."/>
            <person name="Confanioleri F."/>
            <person name="de Daruvar A."/>
            <person name="Despons L."/>
            <person name="Fabre E."/>
            <person name="Fairhead C."/>
            <person name="Ferry-Dumazet H."/>
            <person name="Groppi A."/>
            <person name="Hantraye F."/>
            <person name="Hennequin C."/>
            <person name="Jauniaux N."/>
            <person name="Joyet P."/>
            <person name="Kachouri R."/>
            <person name="Kerrest A."/>
            <person name="Koszul R."/>
            <person name="Lemaire M."/>
            <person name="Lesur I."/>
            <person name="Ma L."/>
            <person name="Muller H."/>
            <person name="Nicaud J.-M."/>
            <person name="Nikolski M."/>
            <person name="Oztas S."/>
            <person name="Ozier-Kalogeropoulos O."/>
            <person name="Pellenz S."/>
            <person name="Potier S."/>
            <person name="Richard G.-F."/>
            <person name="Straub M.-L."/>
            <person name="Suleau A."/>
            <person name="Swennen D."/>
            <person name="Tekaia F."/>
            <person name="Wesolowski-Louvel M."/>
            <person name="Westhof E."/>
            <person name="Wirth B."/>
            <person name="Zeniou-Meyer M."/>
            <person name="Zivanovic Y."/>
            <person name="Bolotin-Fukuhara M."/>
            <person name="Thierry A."/>
            <person name="Bouchier C."/>
            <person name="Caudron B."/>
            <person name="Scarpelli C."/>
            <person name="Gaillardin C."/>
            <person name="Weissenbach J."/>
            <person name="Wincker P."/>
            <person name="Souciet J.-L."/>
        </authorList>
    </citation>
    <scope>NUCLEOTIDE SEQUENCE [LARGE SCALE GENOMIC DNA]</scope>
    <source>
        <strain>ATCC 36239 / CBS 767 / BCRC 21394 / JCM 1990 / NBRC 0083 / IGC 2968</strain>
    </source>
</reference>
<name>H2B2_DEBHA</name>
<protein>
    <recommendedName>
        <fullName>Histone H2B.2</fullName>
    </recommendedName>
</protein>
<evidence type="ECO:0000250" key="1"/>
<evidence type="ECO:0000256" key="2">
    <source>
        <dbReference type="SAM" id="MobiDB-lite"/>
    </source>
</evidence>
<evidence type="ECO:0000305" key="3"/>
<feature type="initiator methionine" description="Removed" evidence="1">
    <location>
        <position position="1"/>
    </location>
</feature>
<feature type="chain" id="PRO_0000245458" description="Histone H2B.2">
    <location>
        <begin position="2"/>
        <end position="129"/>
    </location>
</feature>
<feature type="region of interest" description="Disordered" evidence="2">
    <location>
        <begin position="1"/>
        <end position="38"/>
    </location>
</feature>
<feature type="compositionally biased region" description="Basic and acidic residues" evidence="2">
    <location>
        <begin position="1"/>
        <end position="19"/>
    </location>
</feature>
<feature type="modified residue" description="N6-acetyllysine; alternate" evidence="1">
    <location>
        <position position="7"/>
    </location>
</feature>
<feature type="modified residue" description="N6-acetyllysine; alternate" evidence="1">
    <location>
        <position position="8"/>
    </location>
</feature>
<feature type="modified residue" description="Phosphoserine" evidence="1">
    <location>
        <position position="11"/>
    </location>
</feature>
<feature type="modified residue" description="N6-acetyllysine" evidence="1">
    <location>
        <position position="12"/>
    </location>
</feature>
<feature type="modified residue" description="N6-acetyllysine; alternate" evidence="1">
    <location>
        <position position="17"/>
    </location>
</feature>
<feature type="cross-link" description="Glycyl lysine isopeptide (Lys-Gly) (interchain with G-Cter in SUMO); alternate" evidence="1">
    <location>
        <position position="7"/>
    </location>
</feature>
<feature type="cross-link" description="Glycyl lysine isopeptide (Lys-Gly) (interchain with G-Cter in SUMO); alternate" evidence="1">
    <location>
        <position position="8"/>
    </location>
</feature>
<feature type="cross-link" description="Glycyl lysine isopeptide (Lys-Gly) (interchain with G-Cter in SUMO); alternate" evidence="1">
    <location>
        <position position="17"/>
    </location>
</feature>
<feature type="cross-link" description="Glycyl lysine isopeptide (Lys-Gly) (interchain with G-Cter in SUMO)" evidence="1">
    <location>
        <position position="18"/>
    </location>
</feature>
<feature type="cross-link" description="Glycyl lysine isopeptide (Lys-Gly) (interchain with G-Cter in ubiquitin)" evidence="1">
    <location>
        <position position="123"/>
    </location>
</feature>
<accession>Q6BKW7</accession>
<proteinExistence type="inferred from homology"/>
<comment type="function">
    <text>Core component of nucleosome. Nucleosomes wrap and compact DNA into chromatin, limiting DNA accessibility to the cellular machineries which require DNA as a template. Histones thereby play a central role in transcription regulation, DNA repair, DNA replication and chromosomal stability. DNA accessibility is regulated via a complex set of post-translational modifications of histones, also called histone code, and nucleosome remodeling.</text>
</comment>
<comment type="subunit">
    <text>The nucleosome is a histone octamer containing two molecules each of H2A, H2B, H3 and H4 assembled in one H3-H4 heterotetramer and two H2A-H2B heterodimers. The octamer wraps approximately 147 bp of DNA.</text>
</comment>
<comment type="subcellular location">
    <subcellularLocation>
        <location evidence="1">Nucleus</location>
    </subcellularLocation>
    <subcellularLocation>
        <location evidence="1">Chromosome</location>
    </subcellularLocation>
</comment>
<comment type="PTM">
    <text evidence="1">Monoubiquitinated by the UBC2-BRE1 complex to form H2BK123ub1. H2BK123ub1 gives a specific tag for epigenetic transcriptional activation and is also prerequisite for H3K4me and H3K79me formation. H2BK123ub1 also modulates the formation of double-strand breaks during meiosis and is a prerequisite for DNA-damage checkpoint activation (By similarity).</text>
</comment>
<comment type="PTM">
    <text evidence="1">Phosphorylated by STE20 to form H2BS10ph during progression through meiotic prophase. May be correlated with chromosome condensation (By similarity).</text>
</comment>
<comment type="PTM">
    <text evidence="1">Acetylated by GCN5 to form H2BK11ac and H2BK16ac. H2BK16ac can also be formed by ESA1. Acetylation of N-terminal lysines and particularly formation of H2BK11acK16ac has a positive effect on transcription (By similarity).</text>
</comment>
<comment type="PTM">
    <text evidence="1">Sumoylation to form H2BK6su or H2BK7su, and probably also H2BK16su or H2BK17su, occurs preferentially near the telomeres and represses gene transcription.</text>
</comment>
<comment type="similarity">
    <text evidence="3">Belongs to the histone H2B family.</text>
</comment>
<comment type="caution">
    <text evidence="3">To ensure consistency between histone entries, we follow the 'Brno' nomenclature for histone modifications, with positions referring to those used in the literature for the 'closest' model organism. Due to slight variations in histone sequences between organisms and to the presence of initiator methionine in UniProtKB/Swiss-Prot sequences, the actual positions of modified amino acids in the sequence generally differ. In this entry the following conventions are used: H2BK6ac = acetylated Lys-7; H2BK6su = sumoylated Lys-7; H2BK7ac = acetylated Lys-8; H2BK7su = sumoylated Lys-8; H2BS10ph = phosphorylated Ser-11; H2BK11ac = acetylated Lys-12; H2BK16ac = acetylated Lys-17; H2BK16su = sumoylated Lys-17; H2BK17su = sumoylated Lys-18; H2BK123ub1 = monoubiquitinated Lys-123.</text>
</comment>
<sequence length="129" mass="13988">MAPKAEKKPASKAPAEKKPAAKKTATSGTKKRSKTRKETYSSYIYKVLKQTHPDTGISQKAMSIMNSFVNDIFERIAGEASKLAAYNKKSTISAREIQTAVRLILPGELAKHAVSEGTRAVTKYSSAAN</sequence>
<keyword id="KW-0007">Acetylation</keyword>
<keyword id="KW-0158">Chromosome</keyword>
<keyword id="KW-0238">DNA-binding</keyword>
<keyword id="KW-1017">Isopeptide bond</keyword>
<keyword id="KW-0544">Nucleosome core</keyword>
<keyword id="KW-0539">Nucleus</keyword>
<keyword id="KW-0597">Phosphoprotein</keyword>
<keyword id="KW-1185">Reference proteome</keyword>
<keyword id="KW-0832">Ubl conjugation</keyword>